<name>TRUB_THEFY</name>
<protein>
    <recommendedName>
        <fullName evidence="1">tRNA pseudouridine synthase B</fullName>
        <ecNumber evidence="1">5.4.99.25</ecNumber>
    </recommendedName>
    <alternativeName>
        <fullName evidence="1">tRNA pseudouridine(55) synthase</fullName>
        <shortName evidence="1">Psi55 synthase</shortName>
    </alternativeName>
    <alternativeName>
        <fullName evidence="1">tRNA pseudouridylate synthase</fullName>
    </alternativeName>
    <alternativeName>
        <fullName evidence="1">tRNA-uridine isomerase</fullName>
    </alternativeName>
</protein>
<comment type="function">
    <text evidence="1">Responsible for synthesis of pseudouridine from uracil-55 in the psi GC loop of transfer RNAs.</text>
</comment>
<comment type="catalytic activity">
    <reaction evidence="1">
        <text>uridine(55) in tRNA = pseudouridine(55) in tRNA</text>
        <dbReference type="Rhea" id="RHEA:42532"/>
        <dbReference type="Rhea" id="RHEA-COMP:10101"/>
        <dbReference type="Rhea" id="RHEA-COMP:10102"/>
        <dbReference type="ChEBI" id="CHEBI:65314"/>
        <dbReference type="ChEBI" id="CHEBI:65315"/>
        <dbReference type="EC" id="5.4.99.25"/>
    </reaction>
</comment>
<comment type="similarity">
    <text evidence="1">Belongs to the pseudouridine synthase TruB family. Type 1 subfamily.</text>
</comment>
<reference key="1">
    <citation type="journal article" date="2007" name="J. Bacteriol.">
        <title>Genome sequence and analysis of the soil cellulolytic actinomycete Thermobifida fusca YX.</title>
        <authorList>
            <person name="Lykidis A."/>
            <person name="Mavromatis K."/>
            <person name="Ivanova N."/>
            <person name="Anderson I."/>
            <person name="Land M."/>
            <person name="DiBartolo G."/>
            <person name="Martinez M."/>
            <person name="Lapidus A."/>
            <person name="Lucas S."/>
            <person name="Copeland A."/>
            <person name="Richardson P."/>
            <person name="Wilson D.B."/>
            <person name="Kyrpides N."/>
        </authorList>
    </citation>
    <scope>NUCLEOTIDE SEQUENCE [LARGE SCALE GENOMIC DNA]</scope>
    <source>
        <strain>YX</strain>
    </source>
</reference>
<dbReference type="EC" id="5.4.99.25" evidence="1"/>
<dbReference type="EMBL" id="CP000088">
    <property type="protein sequence ID" value="AAZ54819.1"/>
    <property type="molecule type" value="Genomic_DNA"/>
</dbReference>
<dbReference type="RefSeq" id="WP_011291228.1">
    <property type="nucleotide sequence ID" value="NC_007333.1"/>
</dbReference>
<dbReference type="SMR" id="Q47RU8"/>
<dbReference type="STRING" id="269800.Tfu_0781"/>
<dbReference type="KEGG" id="tfu:Tfu_0781"/>
<dbReference type="eggNOG" id="COG0130">
    <property type="taxonomic scope" value="Bacteria"/>
</dbReference>
<dbReference type="HOGENOM" id="CLU_032087_0_0_11"/>
<dbReference type="OrthoDB" id="9802309at2"/>
<dbReference type="GO" id="GO:0003723">
    <property type="term" value="F:RNA binding"/>
    <property type="evidence" value="ECO:0007669"/>
    <property type="project" value="InterPro"/>
</dbReference>
<dbReference type="GO" id="GO:0160148">
    <property type="term" value="F:tRNA pseudouridine(55) synthase activity"/>
    <property type="evidence" value="ECO:0007669"/>
    <property type="project" value="UniProtKB-EC"/>
</dbReference>
<dbReference type="GO" id="GO:1990481">
    <property type="term" value="P:mRNA pseudouridine synthesis"/>
    <property type="evidence" value="ECO:0007669"/>
    <property type="project" value="TreeGrafter"/>
</dbReference>
<dbReference type="GO" id="GO:0031119">
    <property type="term" value="P:tRNA pseudouridine synthesis"/>
    <property type="evidence" value="ECO:0007669"/>
    <property type="project" value="UniProtKB-UniRule"/>
</dbReference>
<dbReference type="CDD" id="cd02573">
    <property type="entry name" value="PseudoU_synth_EcTruB"/>
    <property type="match status" value="1"/>
</dbReference>
<dbReference type="FunFam" id="3.30.2350.10:FF:000011">
    <property type="entry name" value="tRNA pseudouridine synthase B"/>
    <property type="match status" value="1"/>
</dbReference>
<dbReference type="Gene3D" id="3.30.2350.10">
    <property type="entry name" value="Pseudouridine synthase"/>
    <property type="match status" value="1"/>
</dbReference>
<dbReference type="Gene3D" id="2.30.130.10">
    <property type="entry name" value="PUA domain"/>
    <property type="match status" value="1"/>
</dbReference>
<dbReference type="HAMAP" id="MF_01080">
    <property type="entry name" value="TruB_bact"/>
    <property type="match status" value="1"/>
</dbReference>
<dbReference type="InterPro" id="IPR020103">
    <property type="entry name" value="PsdUridine_synth_cat_dom_sf"/>
</dbReference>
<dbReference type="InterPro" id="IPR002501">
    <property type="entry name" value="PsdUridine_synth_N"/>
</dbReference>
<dbReference type="InterPro" id="IPR015947">
    <property type="entry name" value="PUA-like_sf"/>
</dbReference>
<dbReference type="InterPro" id="IPR036974">
    <property type="entry name" value="PUA_sf"/>
</dbReference>
<dbReference type="InterPro" id="IPR015225">
    <property type="entry name" value="tRNA_psdUridine_synth_fam2_C"/>
</dbReference>
<dbReference type="InterPro" id="IPR014780">
    <property type="entry name" value="tRNA_psdUridine_synth_TruB"/>
</dbReference>
<dbReference type="InterPro" id="IPR032819">
    <property type="entry name" value="TruB_C"/>
</dbReference>
<dbReference type="NCBIfam" id="TIGR00431">
    <property type="entry name" value="TruB"/>
    <property type="match status" value="1"/>
</dbReference>
<dbReference type="PANTHER" id="PTHR13767:SF2">
    <property type="entry name" value="PSEUDOURIDYLATE SYNTHASE TRUB1"/>
    <property type="match status" value="1"/>
</dbReference>
<dbReference type="PANTHER" id="PTHR13767">
    <property type="entry name" value="TRNA-PSEUDOURIDINE SYNTHASE"/>
    <property type="match status" value="1"/>
</dbReference>
<dbReference type="Pfam" id="PF09142">
    <property type="entry name" value="TruB_C"/>
    <property type="match status" value="1"/>
</dbReference>
<dbReference type="Pfam" id="PF16198">
    <property type="entry name" value="TruB_C_2"/>
    <property type="match status" value="1"/>
</dbReference>
<dbReference type="Pfam" id="PF01509">
    <property type="entry name" value="TruB_N"/>
    <property type="match status" value="1"/>
</dbReference>
<dbReference type="SUPFAM" id="SSF55120">
    <property type="entry name" value="Pseudouridine synthase"/>
    <property type="match status" value="1"/>
</dbReference>
<dbReference type="SUPFAM" id="SSF88697">
    <property type="entry name" value="PUA domain-like"/>
    <property type="match status" value="1"/>
</dbReference>
<gene>
    <name evidence="1" type="primary">truB</name>
    <name type="ordered locus">Tfu_0781</name>
</gene>
<accession>Q47RU8</accession>
<feature type="chain" id="PRO_0000229389" description="tRNA pseudouridine synthase B">
    <location>
        <begin position="1"/>
        <end position="293"/>
    </location>
</feature>
<feature type="active site" description="Nucleophile" evidence="1">
    <location>
        <position position="39"/>
    </location>
</feature>
<organism>
    <name type="scientific">Thermobifida fusca (strain YX)</name>
    <dbReference type="NCBI Taxonomy" id="269800"/>
    <lineage>
        <taxon>Bacteria</taxon>
        <taxon>Bacillati</taxon>
        <taxon>Actinomycetota</taxon>
        <taxon>Actinomycetes</taxon>
        <taxon>Streptosporangiales</taxon>
        <taxon>Nocardiopsidaceae</taxon>
        <taxon>Thermobifida</taxon>
    </lineage>
</organism>
<evidence type="ECO:0000255" key="1">
    <source>
        <dbReference type="HAMAP-Rule" id="MF_01080"/>
    </source>
</evidence>
<sequence length="293" mass="30958">MADGVVIVDKPAGWTSHDVVARVRRLAGTRRVGHAGTLDPMATGVLVVGVGKATRLLGYLALTEKVYEATIRLGQSTTTDDAEGELLERRPADHIDEAAVHAGTRALTGVIHQVPPQVSAVKVRGQRAYRRARAGETVELKAREVTVHEFTVTGFRRVDSPDGAFVDVDARVTCSSGTYIRSLARDLGADLGVGGHLTALRRTRVGPYTVEQAATLDELAAEFTVMPLAEAVAAAFPVRRLSAGEARRVVHGHRISPSGHSGPVGLFAPDGRVLALAENRSGSSQPVVVFAGS</sequence>
<keyword id="KW-0413">Isomerase</keyword>
<keyword id="KW-0819">tRNA processing</keyword>
<proteinExistence type="inferred from homology"/>